<dbReference type="EC" id="2.6.1.-" evidence="10"/>
<dbReference type="EC" id="2.1.1.-" evidence="4"/>
<dbReference type="EC" id="2.5.1.18" evidence="10"/>
<dbReference type="EMBL" id="CH476597">
    <property type="protein sequence ID" value="EAU36746.1"/>
    <property type="molecule type" value="Genomic_DNA"/>
</dbReference>
<dbReference type="RefSeq" id="XP_001212650.1">
    <property type="nucleotide sequence ID" value="XM_001212650.1"/>
</dbReference>
<dbReference type="SMR" id="Q0CS62"/>
<dbReference type="STRING" id="341663.Q0CS62"/>
<dbReference type="EnsemblFungi" id="EAU36746">
    <property type="protein sequence ID" value="EAU36746"/>
    <property type="gene ID" value="ATEG_03472"/>
</dbReference>
<dbReference type="GeneID" id="4318085"/>
<dbReference type="VEuPathDB" id="FungiDB:ATEG_03472"/>
<dbReference type="eggNOG" id="KOG0256">
    <property type="taxonomic scope" value="Eukaryota"/>
</dbReference>
<dbReference type="HOGENOM" id="CLU_328711_0_0_1"/>
<dbReference type="OrthoDB" id="1606438at2759"/>
<dbReference type="Proteomes" id="UP000007963">
    <property type="component" value="Unassembled WGS sequence"/>
</dbReference>
<dbReference type="GO" id="GO:0004364">
    <property type="term" value="F:glutathione transferase activity"/>
    <property type="evidence" value="ECO:0007669"/>
    <property type="project" value="UniProtKB-EC"/>
</dbReference>
<dbReference type="GO" id="GO:0008171">
    <property type="term" value="F:O-methyltransferase activity"/>
    <property type="evidence" value="ECO:0007669"/>
    <property type="project" value="InterPro"/>
</dbReference>
<dbReference type="GO" id="GO:0046983">
    <property type="term" value="F:protein dimerization activity"/>
    <property type="evidence" value="ECO:0007669"/>
    <property type="project" value="InterPro"/>
</dbReference>
<dbReference type="GO" id="GO:0030170">
    <property type="term" value="F:pyridoxal phosphate binding"/>
    <property type="evidence" value="ECO:0007669"/>
    <property type="project" value="InterPro"/>
</dbReference>
<dbReference type="GO" id="GO:0032259">
    <property type="term" value="P:methylation"/>
    <property type="evidence" value="ECO:0007669"/>
    <property type="project" value="UniProtKB-KW"/>
</dbReference>
<dbReference type="GO" id="GO:0044550">
    <property type="term" value="P:secondary metabolite biosynthetic process"/>
    <property type="evidence" value="ECO:0007669"/>
    <property type="project" value="UniProtKB-ARBA"/>
</dbReference>
<dbReference type="Gene3D" id="1.20.1050.130">
    <property type="match status" value="1"/>
</dbReference>
<dbReference type="Gene3D" id="3.40.30.10">
    <property type="entry name" value="Glutaredoxin"/>
    <property type="match status" value="1"/>
</dbReference>
<dbReference type="Gene3D" id="3.40.640.10">
    <property type="entry name" value="Type I PLP-dependent aspartate aminotransferase-like (Major domain)"/>
    <property type="match status" value="1"/>
</dbReference>
<dbReference type="Gene3D" id="3.40.50.150">
    <property type="entry name" value="Vaccinia Virus protein VP39"/>
    <property type="match status" value="2"/>
</dbReference>
<dbReference type="Gene3D" id="1.10.10.10">
    <property type="entry name" value="Winged helix-like DNA-binding domain superfamily/Winged helix DNA-binding domain"/>
    <property type="match status" value="1"/>
</dbReference>
<dbReference type="InterPro" id="IPR004839">
    <property type="entry name" value="Aminotransferase_I/II_large"/>
</dbReference>
<dbReference type="InterPro" id="IPR016461">
    <property type="entry name" value="COMT-like"/>
</dbReference>
<dbReference type="InterPro" id="IPR010987">
    <property type="entry name" value="Glutathione-S-Trfase_C-like"/>
</dbReference>
<dbReference type="InterPro" id="IPR036282">
    <property type="entry name" value="Glutathione-S-Trfase_C_sf"/>
</dbReference>
<dbReference type="InterPro" id="IPR004045">
    <property type="entry name" value="Glutathione_S-Trfase_N"/>
</dbReference>
<dbReference type="InterPro" id="IPR001077">
    <property type="entry name" value="O_MeTrfase_dom"/>
</dbReference>
<dbReference type="InterPro" id="IPR012967">
    <property type="entry name" value="Plant_O-MeTrfase_dimerisation"/>
</dbReference>
<dbReference type="InterPro" id="IPR015424">
    <property type="entry name" value="PyrdxlP-dep_Trfase"/>
</dbReference>
<dbReference type="InterPro" id="IPR015421">
    <property type="entry name" value="PyrdxlP-dep_Trfase_major"/>
</dbReference>
<dbReference type="InterPro" id="IPR029063">
    <property type="entry name" value="SAM-dependent_MTases_sf"/>
</dbReference>
<dbReference type="InterPro" id="IPR036249">
    <property type="entry name" value="Thioredoxin-like_sf"/>
</dbReference>
<dbReference type="InterPro" id="IPR036388">
    <property type="entry name" value="WH-like_DNA-bd_sf"/>
</dbReference>
<dbReference type="InterPro" id="IPR036390">
    <property type="entry name" value="WH_DNA-bd_sf"/>
</dbReference>
<dbReference type="PANTHER" id="PTHR43712:SF2">
    <property type="entry name" value="O-METHYLTRANSFERASE CICE"/>
    <property type="match status" value="1"/>
</dbReference>
<dbReference type="PANTHER" id="PTHR43712">
    <property type="entry name" value="PUTATIVE (AFU_ORTHOLOGUE AFUA_4G14580)-RELATED"/>
    <property type="match status" value="1"/>
</dbReference>
<dbReference type="Pfam" id="PF00155">
    <property type="entry name" value="Aminotran_1_2"/>
    <property type="match status" value="1"/>
</dbReference>
<dbReference type="Pfam" id="PF08100">
    <property type="entry name" value="Dimerisation"/>
    <property type="match status" value="1"/>
</dbReference>
<dbReference type="Pfam" id="PF13409">
    <property type="entry name" value="GST_N_2"/>
    <property type="match status" value="1"/>
</dbReference>
<dbReference type="Pfam" id="PF00891">
    <property type="entry name" value="Methyltransf_2"/>
    <property type="match status" value="1"/>
</dbReference>
<dbReference type="PRINTS" id="PR00753">
    <property type="entry name" value="ACCSYNTHASE"/>
</dbReference>
<dbReference type="SUPFAM" id="SSF47616">
    <property type="entry name" value="GST C-terminal domain-like"/>
    <property type="match status" value="1"/>
</dbReference>
<dbReference type="SUPFAM" id="SSF53383">
    <property type="entry name" value="PLP-dependent transferases"/>
    <property type="match status" value="1"/>
</dbReference>
<dbReference type="SUPFAM" id="SSF53335">
    <property type="entry name" value="S-adenosyl-L-methionine-dependent methyltransferases"/>
    <property type="match status" value="1"/>
</dbReference>
<dbReference type="SUPFAM" id="SSF52833">
    <property type="entry name" value="Thioredoxin-like"/>
    <property type="match status" value="1"/>
</dbReference>
<dbReference type="SUPFAM" id="SSF46785">
    <property type="entry name" value="Winged helix' DNA-binding domain"/>
    <property type="match status" value="1"/>
</dbReference>
<dbReference type="PROSITE" id="PS50405">
    <property type="entry name" value="GST_CTER"/>
    <property type="match status" value="1"/>
</dbReference>
<dbReference type="PROSITE" id="PS50404">
    <property type="entry name" value="GST_NTER"/>
    <property type="match status" value="1"/>
</dbReference>
<dbReference type="PROSITE" id="PS51683">
    <property type="entry name" value="SAM_OMT_II"/>
    <property type="match status" value="1"/>
</dbReference>
<organism>
    <name type="scientific">Aspergillus terreus (strain NIH 2624 / FGSC A1156)</name>
    <dbReference type="NCBI Taxonomy" id="341663"/>
    <lineage>
        <taxon>Eukaryota</taxon>
        <taxon>Fungi</taxon>
        <taxon>Dikarya</taxon>
        <taxon>Ascomycota</taxon>
        <taxon>Pezizomycotina</taxon>
        <taxon>Eurotiomycetes</taxon>
        <taxon>Eurotiomycetidae</taxon>
        <taxon>Eurotiales</taxon>
        <taxon>Aspergillaceae</taxon>
        <taxon>Aspergillus</taxon>
        <taxon>Aspergillus subgen. Circumdati</taxon>
    </lineage>
</organism>
<accession>Q0CS62</accession>
<sequence length="874" mass="97280">MANLSGLSNRSRTTLASLRRFGFQTTQQAKPTESSKTPIDASVAENWSIRPELLSLFQETLQTELGAQVRIRPRPRILALSHGRNTNTVSADGFDFHFGVRAQVNPVAAPIRDLHDAFNPDGLLESLTAAFDTSPYPIRAVVLTYPGNPLGQCCSAEALRRCAKFCHDRELHLICDEVYALSYFGAADSEATPFQSIVSFDLNAMGCDLSRVHVVWSMSKDFGCSGLRLGCVISQANPELILGLRVPTSTEVSSLSTLCSTALLTSATLPDIIELNVKRLLLSYKAVIATLECHGVEYIPATAGLCVFARLAPEAKTPDDEIGFQHRLRDSGLLRASSISYNSMVKGSSDKIRPNNVRQKKMEPTLKILGASLQEALSQLTGPLNKERLAALHDHSEGRLVDANLGEAAAYTIDLLHQVEQLLEPSSLVLADHFLGYLNTKCLCAAVEFHIPDLLVEGPKSVSQLAQLSGARADRLGQVLRLLRNNGIFQYDTENATYSNNPTSSMLRSDHWTQWHNWVDLYGNEFYDMARGIPASLKQGTTRTPAQINFNTDQCMFDYFTAQGWLPRLHRTLGGGATAQAPGILADYPWEDFGDGPFLDIGGGEGALIALILRRHTRTKAALLDTPRVIEHARTLFLSPDGKLSRYGDLTMMVSADGQERTEAEWRTLAGRTGWEIRTIRKLRGAWPSDETSYINYIKPLILAHELEIPHVLSVIDTKDEWFYRIHPERMVPSLKDQDPETKAEVIVFESTACLQYLADRFDDGTWTGRNAAERGSVLSWTAYQTAALGLHENCLRQWDILEKRLARDGQEYIALKDRPTIADLSYFPFSMPWMFQFLGVDIKDWPSIERWSQRMLARPAVQAVMEMGPQIGH</sequence>
<gene>
    <name evidence="8" type="primary">ataIMG</name>
    <name type="ORF">ATEG_03472</name>
</gene>
<protein>
    <recommendedName>
        <fullName evidence="8">Trimodular acetylaranotin synthesis protein ataIMG</fullName>
    </recommendedName>
    <alternativeName>
        <fullName evidence="8">Acetylaranotin biosynthesis cluster protein IMG</fullName>
    </alternativeName>
    <domain>
        <recommendedName>
            <fullName evidence="8">Aminotransferase ataI</fullName>
            <ecNumber evidence="10">2.6.1.-</ecNumber>
        </recommendedName>
    </domain>
    <domain>
        <recommendedName>
            <fullName evidence="8">O-methyltransferase ataM</fullName>
            <ecNumber evidence="4">2.1.1.-</ecNumber>
        </recommendedName>
    </domain>
    <domain>
        <recommendedName>
            <fullName evidence="8">Glutathione S-transferase ataG</fullName>
            <ecNumber evidence="10">2.5.1.18</ecNumber>
        </recommendedName>
    </domain>
</protein>
<evidence type="ECO:0000250" key="1">
    <source>
        <dbReference type="UniProtKB" id="P00509"/>
    </source>
</evidence>
<evidence type="ECO:0000255" key="2">
    <source>
        <dbReference type="PROSITE-ProRule" id="PRU00684"/>
    </source>
</evidence>
<evidence type="ECO:0000255" key="3">
    <source>
        <dbReference type="PROSITE-ProRule" id="PRU00685"/>
    </source>
</evidence>
<evidence type="ECO:0000255" key="4">
    <source>
        <dbReference type="PROSITE-ProRule" id="PRU01020"/>
    </source>
</evidence>
<evidence type="ECO:0000256" key="5">
    <source>
        <dbReference type="SAM" id="MobiDB-lite"/>
    </source>
</evidence>
<evidence type="ECO:0000269" key="6">
    <source>
    </source>
</evidence>
<evidence type="ECO:0000269" key="7">
    <source>
    </source>
</evidence>
<evidence type="ECO:0000303" key="8">
    <source>
    </source>
</evidence>
<evidence type="ECO:0000305" key="9"/>
<evidence type="ECO:0000305" key="10">
    <source>
    </source>
</evidence>
<proteinExistence type="inferred from homology"/>
<name>ATIMG_ASPTN</name>
<feature type="chain" id="PRO_0000440664" description="Trimodular acetylaranotin synthesis protein ataIMG">
    <location>
        <begin position="1"/>
        <end position="874"/>
    </location>
</feature>
<feature type="domain" description="GST N-terminal" evidence="2">
    <location>
        <begin position="699"/>
        <end position="766"/>
    </location>
</feature>
<feature type="domain" description="GST C-terminal" evidence="3">
    <location>
        <begin position="739"/>
        <end position="874"/>
    </location>
</feature>
<feature type="region of interest" description="Aminotransferase ataI" evidence="10">
    <location>
        <begin position="1"/>
        <end position="339"/>
    </location>
</feature>
<feature type="region of interest" description="Disordered" evidence="5">
    <location>
        <begin position="20"/>
        <end position="39"/>
    </location>
</feature>
<feature type="region of interest" description="O-methyltransferase ataM" evidence="10">
    <location>
        <begin position="340"/>
        <end position="668"/>
    </location>
</feature>
<feature type="region of interest" description="Glutathione S-transferase ataG" evidence="10">
    <location>
        <begin position="669"/>
        <end position="874"/>
    </location>
</feature>
<feature type="compositionally biased region" description="Polar residues" evidence="5">
    <location>
        <begin position="23"/>
        <end position="37"/>
    </location>
</feature>
<feature type="binding site" evidence="4">
    <location>
        <position position="625"/>
    </location>
    <ligand>
        <name>S-adenosyl-L-methionine</name>
        <dbReference type="ChEBI" id="CHEBI:59789"/>
    </ligand>
</feature>
<reference key="1">
    <citation type="submission" date="2005-09" db="EMBL/GenBank/DDBJ databases">
        <title>Annotation of the Aspergillus terreus NIH2624 genome.</title>
        <authorList>
            <person name="Birren B.W."/>
            <person name="Lander E.S."/>
            <person name="Galagan J.E."/>
            <person name="Nusbaum C."/>
            <person name="Devon K."/>
            <person name="Henn M."/>
            <person name="Ma L.-J."/>
            <person name="Jaffe D.B."/>
            <person name="Butler J."/>
            <person name="Alvarez P."/>
            <person name="Gnerre S."/>
            <person name="Grabherr M."/>
            <person name="Kleber M."/>
            <person name="Mauceli E.W."/>
            <person name="Brockman W."/>
            <person name="Rounsley S."/>
            <person name="Young S.K."/>
            <person name="LaButti K."/>
            <person name="Pushparaj V."/>
            <person name="DeCaprio D."/>
            <person name="Crawford M."/>
            <person name="Koehrsen M."/>
            <person name="Engels R."/>
            <person name="Montgomery P."/>
            <person name="Pearson M."/>
            <person name="Howarth C."/>
            <person name="Larson L."/>
            <person name="Luoma S."/>
            <person name="White J."/>
            <person name="Alvarado L."/>
            <person name="Kodira C.D."/>
            <person name="Zeng Q."/>
            <person name="Oleary S."/>
            <person name="Yandava C."/>
            <person name="Denning D.W."/>
            <person name="Nierman W.C."/>
            <person name="Milne T."/>
            <person name="Madden K."/>
        </authorList>
    </citation>
    <scope>NUCLEOTIDE SEQUENCE [LARGE SCALE GENOMIC DNA]</scope>
    <source>
        <strain>NIH 2624 / FGSC A1156</strain>
    </source>
</reference>
<reference key="2">
    <citation type="journal article" date="2013" name="J. Am. Chem. Soc.">
        <title>Biosynthetic pathway for the epipolythiodioxopiperazine acetylaranotin in Aspergillus terreus revealed by genome-based deletion analysis.</title>
        <authorList>
            <person name="Guo C.J."/>
            <person name="Yeh H.H."/>
            <person name="Chiang Y.M."/>
            <person name="Sanchez J.F."/>
            <person name="Chang S.L."/>
            <person name="Bruno K.S."/>
            <person name="Wang C.C."/>
        </authorList>
    </citation>
    <scope>FUNCTION</scope>
    <scope>DISRUPTION PHENOTYPE</scope>
    <scope>PATHWAY</scope>
</reference>
<reference key="3">
    <citation type="journal article" date="2018" name="Fungal Genet. Biol.">
        <title>Genome-based deletion analysis in Aspergillus terreus reveals the acetylaranotin bis-thiomethyltransferase gene.</title>
        <authorList>
            <person name="Sun W.W."/>
            <person name="Romsdahl J."/>
            <person name="Guo C.J."/>
            <person name="Wang C.C.C."/>
        </authorList>
    </citation>
    <scope>FUNCTION</scope>
</reference>
<keyword id="KW-0489">Methyltransferase</keyword>
<keyword id="KW-0511">Multifunctional enzyme</keyword>
<keyword id="KW-1185">Reference proteome</keyword>
<keyword id="KW-0949">S-adenosyl-L-methionine</keyword>
<keyword id="KW-0808">Transferase</keyword>
<comment type="function">
    <text evidence="6 7">Trimodular acetylaranotin synthesis protein; part of the gene cluster that mediates the biosynthesis of acetylaranotin, a member of the epipolythiodioxopiperazine (ETP) class of toxins characterized by a disulfide-bridged cyclic dipeptide (PubMed:23586797). The first step of acetylaranotin biosynthesis is performed by the NRPS ataP which produces diketopiperazine cyclo-L-Phe-L-Phe via the condensation of 2 phenylalanines (L-Phe) (PubMed:23586797). The ataC domain of ataTC then catalyzes the formation of bishydroxylation of cyclo-L-Phe-L-Phe (PubMed:23586797). The glutathione S-transferase domain ataG in ataIMG further catalyzes the conjugation of two glutathiones to the bishydroxylated intermediate (PubMed:23586797). Next, the dipeptidase ataJ removes the Glu residues (PubMed:23586797). The following step is performed by the carbon sulfur lyase domain ataI of ataIMG which may convert the bis-cysteinyl adduct to yield an epidithiol intermediate (PubMed:23586797). The ataT domain from ataTC then catalyzes the oxidation of the free dithiols, followed by a cyclization step catalyzed by the cytochrome P450 ataF (PubMed:23586797). AtaF probably acts as an epoxidase to promote a dual epoxidation formation at C8 and C9 along with C8' and C9', followed by the spontaneous nucleophilic attack of the amide nitrogens N10 and N10' to yield an intermediate with the pyrrolidine partial structure (PubMed:23586797). The final steps of acetylaranotin biosynthesis involve the acetylation and ring rearrangement of an epitetrathiodiketopiperazine intermediate to produce acetylaranotin (PubMed:23586797). AtaH probably catalyzes the acetylation of epitetrathiodiketopiperazine to produce a diacetate and ataY is responsible for the formation of the dihydrooxepin moiety that converts the diacetate intermediate to acetylaranotin via acetylapoaranotin (PubMed:23586797). Both enzymes could function independently in the absence of the other (PubMed:23586797). The acetylaranotin bis-thiomethyltransferase ataS located outside of acetylaranotin gene cluster is the main thiomethyltransferase responsible for converting acetylaranotin and its related intermediates to their methylated forms (PubMed:30096370).</text>
</comment>
<comment type="catalytic activity">
    <reaction evidence="6">
        <text>RX + glutathione = an S-substituted glutathione + a halide anion + H(+)</text>
        <dbReference type="Rhea" id="RHEA:16437"/>
        <dbReference type="ChEBI" id="CHEBI:15378"/>
        <dbReference type="ChEBI" id="CHEBI:16042"/>
        <dbReference type="ChEBI" id="CHEBI:17792"/>
        <dbReference type="ChEBI" id="CHEBI:57925"/>
        <dbReference type="ChEBI" id="CHEBI:90779"/>
        <dbReference type="EC" id="2.5.1.18"/>
    </reaction>
</comment>
<comment type="cofactor">
    <cofactor evidence="1">
        <name>pyridoxal 5'-phosphate</name>
        <dbReference type="ChEBI" id="CHEBI:597326"/>
    </cofactor>
</comment>
<comment type="pathway">
    <text evidence="6">Mycotoxin biosynthesis.</text>
</comment>
<comment type="disruption phenotype">
    <text evidence="6">Impairs the production of acetylaranotin and accumulates chemically stable intermediates or shunt products such as 2-imino-3-phenyl-propionic acid amide (PubMed:23586797).</text>
</comment>
<comment type="similarity">
    <text evidence="9">In the N-terminal section; belongs to the class-I pyridoxal-phosphate-dependent aminotransferase family.</text>
</comment>
<comment type="similarity">
    <text evidence="9">In the 2nd section; belongs to the class I-like SAM-binding methyltransferase superfamily. Cation-independent O-methyltransferase family.</text>
</comment>
<comment type="similarity">
    <text evidence="9">In the C-terminal section; belongs to the GST superfamily.</text>
</comment>